<evidence type="ECO:0000250" key="1">
    <source>
        <dbReference type="UniProtKB" id="Q9CA75"/>
    </source>
</evidence>
<evidence type="ECO:0000255" key="2"/>
<evidence type="ECO:0000256" key="3">
    <source>
        <dbReference type="SAM" id="MobiDB-lite"/>
    </source>
</evidence>
<evidence type="ECO:0000305" key="4"/>
<gene>
    <name evidence="4" type="primary">XXT3</name>
    <name type="synonym">GT3</name>
    <name type="synonym">GTL7</name>
    <name type="ordered locus">At5g07720</name>
    <name type="ORF">MBK20.18</name>
</gene>
<keyword id="KW-0325">Glycoprotein</keyword>
<keyword id="KW-0328">Glycosyltransferase</keyword>
<keyword id="KW-0333">Golgi apparatus</keyword>
<keyword id="KW-0472">Membrane</keyword>
<keyword id="KW-1185">Reference proteome</keyword>
<keyword id="KW-0735">Signal-anchor</keyword>
<keyword id="KW-0808">Transferase</keyword>
<keyword id="KW-0812">Transmembrane</keyword>
<keyword id="KW-1133">Transmembrane helix</keyword>
<dbReference type="EC" id="2.4.2.39" evidence="4"/>
<dbReference type="EC" id="2.4.-.-"/>
<dbReference type="EMBL" id="KJ138699">
    <property type="protein sequence ID" value="AHL38639.1"/>
    <property type="molecule type" value="mRNA"/>
</dbReference>
<dbReference type="EMBL" id="AJ245573">
    <property type="protein sequence ID" value="CAC01676.1"/>
    <property type="molecule type" value="mRNA"/>
</dbReference>
<dbReference type="EMBL" id="AB010070">
    <property type="protein sequence ID" value="BAB11451.1"/>
    <property type="molecule type" value="Genomic_DNA"/>
</dbReference>
<dbReference type="EMBL" id="CP002688">
    <property type="protein sequence ID" value="AED91197.1"/>
    <property type="molecule type" value="Genomic_DNA"/>
</dbReference>
<dbReference type="EMBL" id="BT010365">
    <property type="protein sequence ID" value="AAQ56808.1"/>
    <property type="molecule type" value="mRNA"/>
</dbReference>
<dbReference type="EMBL" id="AK227750">
    <property type="protein sequence ID" value="BAE99734.1"/>
    <property type="molecule type" value="mRNA"/>
</dbReference>
<dbReference type="RefSeq" id="NP_196389.1">
    <property type="nucleotide sequence ID" value="NM_120854.3"/>
</dbReference>
<dbReference type="SMR" id="Q9LF80"/>
<dbReference type="BioGRID" id="15944">
    <property type="interactions" value="1"/>
</dbReference>
<dbReference type="FunCoup" id="Q9LF80">
    <property type="interactions" value="32"/>
</dbReference>
<dbReference type="STRING" id="3702.Q9LF80"/>
<dbReference type="CAZy" id="GT34">
    <property type="family name" value="Glycosyltransferase Family 34"/>
</dbReference>
<dbReference type="GlyCosmos" id="Q9LF80">
    <property type="glycosylation" value="2 sites, No reported glycans"/>
</dbReference>
<dbReference type="GlyGen" id="Q9LF80">
    <property type="glycosylation" value="2 sites"/>
</dbReference>
<dbReference type="PaxDb" id="3702-AT5G07720.1"/>
<dbReference type="ProteomicsDB" id="242380"/>
<dbReference type="EnsemblPlants" id="AT5G07720.1">
    <property type="protein sequence ID" value="AT5G07720.1"/>
    <property type="gene ID" value="AT5G07720"/>
</dbReference>
<dbReference type="GeneID" id="830665"/>
<dbReference type="Gramene" id="AT5G07720.1">
    <property type="protein sequence ID" value="AT5G07720.1"/>
    <property type="gene ID" value="AT5G07720"/>
</dbReference>
<dbReference type="KEGG" id="ath:AT5G07720"/>
<dbReference type="Araport" id="AT5G07720"/>
<dbReference type="TAIR" id="AT5G07720">
    <property type="gene designation" value="XXT3"/>
</dbReference>
<dbReference type="eggNOG" id="KOG4748">
    <property type="taxonomic scope" value="Eukaryota"/>
</dbReference>
<dbReference type="HOGENOM" id="CLU_034328_1_0_1"/>
<dbReference type="InParanoid" id="Q9LF80"/>
<dbReference type="OMA" id="RNETTFP"/>
<dbReference type="PhylomeDB" id="Q9LF80"/>
<dbReference type="BioCyc" id="ARA:AT5G07720-MONOMER"/>
<dbReference type="PRO" id="PR:Q9LF80"/>
<dbReference type="Proteomes" id="UP000006548">
    <property type="component" value="Chromosome 5"/>
</dbReference>
<dbReference type="ExpressionAtlas" id="Q9LF80">
    <property type="expression patterns" value="baseline and differential"/>
</dbReference>
<dbReference type="GO" id="GO:0000139">
    <property type="term" value="C:Golgi membrane"/>
    <property type="evidence" value="ECO:0007669"/>
    <property type="project" value="UniProtKB-SubCell"/>
</dbReference>
<dbReference type="GO" id="GO:0033843">
    <property type="term" value="F:xyloglucan 6-xylosyltransferase activity"/>
    <property type="evidence" value="ECO:0007669"/>
    <property type="project" value="UniProtKB-EC"/>
</dbReference>
<dbReference type="GO" id="GO:0010411">
    <property type="term" value="P:xyloglucan metabolic process"/>
    <property type="evidence" value="ECO:0000315"/>
    <property type="project" value="TAIR"/>
</dbReference>
<dbReference type="FunFam" id="3.90.550.10:FF:000032">
    <property type="entry name" value="xyloglucan 6-xylosyltransferase 2"/>
    <property type="match status" value="1"/>
</dbReference>
<dbReference type="Gene3D" id="3.90.550.10">
    <property type="entry name" value="Spore Coat Polysaccharide Biosynthesis Protein SpsA, Chain A"/>
    <property type="match status" value="1"/>
</dbReference>
<dbReference type="InterPro" id="IPR008630">
    <property type="entry name" value="Glyco_trans_34"/>
</dbReference>
<dbReference type="InterPro" id="IPR029044">
    <property type="entry name" value="Nucleotide-diphossugar_trans"/>
</dbReference>
<dbReference type="PANTHER" id="PTHR31311:SF12">
    <property type="entry name" value="XYLOGLUCAN 6-XYLOSYLTRANSFERASE 3-RELATED"/>
    <property type="match status" value="1"/>
</dbReference>
<dbReference type="PANTHER" id="PTHR31311">
    <property type="entry name" value="XYLOGLUCAN 6-XYLOSYLTRANSFERASE 5-RELATED-RELATED"/>
    <property type="match status" value="1"/>
</dbReference>
<dbReference type="Pfam" id="PF05637">
    <property type="entry name" value="Glyco_transf_34"/>
    <property type="match status" value="1"/>
</dbReference>
<name>XXT3_ARATH</name>
<feature type="chain" id="PRO_0000215171" description="Probable xyloglucan 6-xylosyltransferase 3">
    <location>
        <begin position="1"/>
        <end position="457"/>
    </location>
</feature>
<feature type="topological domain" description="Cytoplasmic" evidence="2">
    <location>
        <begin position="1"/>
        <end position="51"/>
    </location>
</feature>
<feature type="transmembrane region" description="Helical; Signal-anchor for type II membrane protein" evidence="2">
    <location>
        <begin position="52"/>
        <end position="71"/>
    </location>
</feature>
<feature type="topological domain" description="Lumenal" evidence="2">
    <location>
        <begin position="72"/>
        <end position="457"/>
    </location>
</feature>
<feature type="region of interest" description="Disordered" evidence="3">
    <location>
        <begin position="1"/>
        <end position="40"/>
    </location>
</feature>
<feature type="glycosylation site" description="N-linked (GlcNAc...) asparagine" evidence="2">
    <location>
        <position position="115"/>
    </location>
</feature>
<feature type="glycosylation site" description="N-linked (GlcNAc...) asparagine" evidence="2">
    <location>
        <position position="431"/>
    </location>
</feature>
<reference key="1">
    <citation type="journal article" date="2014" name="Plant J.">
        <title>The plant glycosyltransferase clone collection for functional genomics.</title>
        <authorList>
            <person name="Lao J."/>
            <person name="Oikawa A."/>
            <person name="Bromley J.R."/>
            <person name="McInerney P."/>
            <person name="Suttangkakul A."/>
            <person name="Smith-Moritz A.M."/>
            <person name="Plahar H."/>
            <person name="Chiu T.-Y."/>
            <person name="Gonzalez Fernandez-Nino S.M.G."/>
            <person name="Ebert B."/>
            <person name="Yang F."/>
            <person name="Christiansen K.M."/>
            <person name="Hansen S.F."/>
            <person name="Stonebloom S."/>
            <person name="Adams P.D."/>
            <person name="Ronald P.C."/>
            <person name="Hillson N.J."/>
            <person name="Hadi M.Z."/>
            <person name="Vega-Sanchez M.E."/>
            <person name="Loque D."/>
            <person name="Scheller H.V."/>
            <person name="Heazlewood J.L."/>
        </authorList>
    </citation>
    <scope>NUCLEOTIDE SEQUENCE [MRNA]</scope>
    <source>
        <strain>cv. Columbia</strain>
    </source>
</reference>
<reference key="2">
    <citation type="submission" date="1999-08" db="EMBL/GenBank/DDBJ databases">
        <title>A novel Arabidopsis Golgi glycosyltransferase.</title>
        <authorList>
            <person name="Mogelsvang S."/>
            <person name="Dupree P."/>
        </authorList>
    </citation>
    <scope>NUCLEOTIDE SEQUENCE [MRNA]</scope>
    <source>
        <strain>cv. Columbia</strain>
    </source>
</reference>
<reference key="3">
    <citation type="journal article" date="1998" name="DNA Res.">
        <title>Structural analysis of Arabidopsis thaliana chromosome 5. IV. Sequence features of the regions of 1,456,315 bp covered by nineteen physically assigned P1 and TAC clones.</title>
        <authorList>
            <person name="Sato S."/>
            <person name="Kaneko T."/>
            <person name="Kotani H."/>
            <person name="Nakamura Y."/>
            <person name="Asamizu E."/>
            <person name="Miyajima N."/>
            <person name="Tabata S."/>
        </authorList>
    </citation>
    <scope>NUCLEOTIDE SEQUENCE [LARGE SCALE GENOMIC DNA]</scope>
    <source>
        <strain>cv. Columbia</strain>
    </source>
</reference>
<reference key="4">
    <citation type="journal article" date="2017" name="Plant J.">
        <title>Araport11: a complete reannotation of the Arabidopsis thaliana reference genome.</title>
        <authorList>
            <person name="Cheng C.Y."/>
            <person name="Krishnakumar V."/>
            <person name="Chan A.P."/>
            <person name="Thibaud-Nissen F."/>
            <person name="Schobel S."/>
            <person name="Town C.D."/>
        </authorList>
    </citation>
    <scope>GENOME REANNOTATION</scope>
    <source>
        <strain>cv. Columbia</strain>
    </source>
</reference>
<reference key="5">
    <citation type="journal article" date="2003" name="Science">
        <title>Empirical analysis of transcriptional activity in the Arabidopsis genome.</title>
        <authorList>
            <person name="Yamada K."/>
            <person name="Lim J."/>
            <person name="Dale J.M."/>
            <person name="Chen H."/>
            <person name="Shinn P."/>
            <person name="Palm C.J."/>
            <person name="Southwick A.M."/>
            <person name="Wu H.C."/>
            <person name="Kim C.J."/>
            <person name="Nguyen M."/>
            <person name="Pham P.K."/>
            <person name="Cheuk R.F."/>
            <person name="Karlin-Newmann G."/>
            <person name="Liu S.X."/>
            <person name="Lam B."/>
            <person name="Sakano H."/>
            <person name="Wu T."/>
            <person name="Yu G."/>
            <person name="Miranda M."/>
            <person name="Quach H.L."/>
            <person name="Tripp M."/>
            <person name="Chang C.H."/>
            <person name="Lee J.M."/>
            <person name="Toriumi M.J."/>
            <person name="Chan M.M."/>
            <person name="Tang C.C."/>
            <person name="Onodera C.S."/>
            <person name="Deng J.M."/>
            <person name="Akiyama K."/>
            <person name="Ansari Y."/>
            <person name="Arakawa T."/>
            <person name="Banh J."/>
            <person name="Banno F."/>
            <person name="Bowser L."/>
            <person name="Brooks S.Y."/>
            <person name="Carninci P."/>
            <person name="Chao Q."/>
            <person name="Choy N."/>
            <person name="Enju A."/>
            <person name="Goldsmith A.D."/>
            <person name="Gurjal M."/>
            <person name="Hansen N.F."/>
            <person name="Hayashizaki Y."/>
            <person name="Johnson-Hopson C."/>
            <person name="Hsuan V.W."/>
            <person name="Iida K."/>
            <person name="Karnes M."/>
            <person name="Khan S."/>
            <person name="Koesema E."/>
            <person name="Ishida J."/>
            <person name="Jiang P.X."/>
            <person name="Jones T."/>
            <person name="Kawai J."/>
            <person name="Kamiya A."/>
            <person name="Meyers C."/>
            <person name="Nakajima M."/>
            <person name="Narusaka M."/>
            <person name="Seki M."/>
            <person name="Sakurai T."/>
            <person name="Satou M."/>
            <person name="Tamse R."/>
            <person name="Vaysberg M."/>
            <person name="Wallender E.K."/>
            <person name="Wong C."/>
            <person name="Yamamura Y."/>
            <person name="Yuan S."/>
            <person name="Shinozaki K."/>
            <person name="Davis R.W."/>
            <person name="Theologis A."/>
            <person name="Ecker J.R."/>
        </authorList>
    </citation>
    <scope>NUCLEOTIDE SEQUENCE [LARGE SCALE MRNA]</scope>
    <source>
        <strain>cv. Columbia</strain>
    </source>
</reference>
<reference key="6">
    <citation type="submission" date="2006-07" db="EMBL/GenBank/DDBJ databases">
        <title>Large-scale analysis of RIKEN Arabidopsis full-length (RAFL) cDNAs.</title>
        <authorList>
            <person name="Totoki Y."/>
            <person name="Seki M."/>
            <person name="Ishida J."/>
            <person name="Nakajima M."/>
            <person name="Enju A."/>
            <person name="Kamiya A."/>
            <person name="Narusaka M."/>
            <person name="Shin-i T."/>
            <person name="Nakagawa M."/>
            <person name="Sakamoto N."/>
            <person name="Oishi K."/>
            <person name="Kohara Y."/>
            <person name="Kobayashi M."/>
            <person name="Toyoda A."/>
            <person name="Sakaki Y."/>
            <person name="Sakurai T."/>
            <person name="Iida K."/>
            <person name="Akiyama K."/>
            <person name="Satou M."/>
            <person name="Toyoda T."/>
            <person name="Konagaya A."/>
            <person name="Carninci P."/>
            <person name="Kawai J."/>
            <person name="Hayashizaki Y."/>
            <person name="Shinozaki K."/>
        </authorList>
    </citation>
    <scope>NUCLEOTIDE SEQUENCE [LARGE SCALE MRNA]</scope>
    <source>
        <strain>cv. Columbia</strain>
    </source>
</reference>
<reference key="7">
    <citation type="journal article" date="2002" name="Proc. Natl. Acad. Sci. U.S.A.">
        <title>An Arabidopsis gene encoding an alpha-xylosyltransferase involved in xyloglucan biosynthesis.</title>
        <authorList>
            <person name="Faik A."/>
            <person name="Price N.J."/>
            <person name="Raikhel N.V."/>
            <person name="Keegstra K."/>
        </authorList>
    </citation>
    <scope>GENE FAMILY</scope>
    <scope>NOMENCLATURE</scope>
</reference>
<sequence length="457" mass="52367">MGKEDGFRTQKRVSTASSAAAGVLPTTMASGGVRRPPPRGRQIQKTFNNVKMTILCGFVTILVLRGTIGINFGTSDADVVNQNIIEETNRLLAEIRSDSDPTDSNEPPDSDLDLNMTYTLGPKITNWDQKRKLWLTQNPDFPSFINGKAKVLLLTGSPPKPCDNPIGDHYLLKSVKNKIDYCRIHGIEIVYNMAHLDKELAGYWAKLPMIRRLMLSHPEIEWIWWMDSDALFTDMVFEIPLSRYENHNLVIHGYPDLLFDQKSWIALNTGSFLFRNCQWSLDLLDAWAPMGPKGPIREEAGKILTANLKGRPAFEADDQSALIYLLLSQKETWMEKVFVENQYYLHGFWEGLVDKYEEMMEKYHPGLGDERWPFITHFVGCKPCGSYADYAVERCLKSMERAFNFADNQVLKLYGFGHRGLLSPKIKRIRNETTFPLKFVDRFDIRRTTPLKIEARS</sequence>
<proteinExistence type="evidence at transcript level"/>
<accession>Q9LF80</accession>
<accession>Q0WT14</accession>
<organism>
    <name type="scientific">Arabidopsis thaliana</name>
    <name type="common">Mouse-ear cress</name>
    <dbReference type="NCBI Taxonomy" id="3702"/>
    <lineage>
        <taxon>Eukaryota</taxon>
        <taxon>Viridiplantae</taxon>
        <taxon>Streptophyta</taxon>
        <taxon>Embryophyta</taxon>
        <taxon>Tracheophyta</taxon>
        <taxon>Spermatophyta</taxon>
        <taxon>Magnoliopsida</taxon>
        <taxon>eudicotyledons</taxon>
        <taxon>Gunneridae</taxon>
        <taxon>Pentapetalae</taxon>
        <taxon>rosids</taxon>
        <taxon>malvids</taxon>
        <taxon>Brassicales</taxon>
        <taxon>Brassicaceae</taxon>
        <taxon>Camelineae</taxon>
        <taxon>Arabidopsis</taxon>
    </lineage>
</organism>
<comment type="function">
    <text evidence="1">Probable xyloglucan xylosyltransferase involved in the biosynthesis of xyloglucan.</text>
</comment>
<comment type="catalytic activity">
    <reaction evidence="4">
        <text>Transfers an alpha-D-xylosyl residue from UDP-D-xylose to a glucose residue in xyloglucan, forming an alpha-(1-&gt;6)-D-xylosyl-D-glucose linkage.</text>
        <dbReference type="EC" id="2.4.2.39"/>
    </reaction>
</comment>
<comment type="subcellular location">
    <subcellularLocation>
        <location evidence="4">Golgi apparatus membrane</location>
        <topology evidence="4">Single-pass type II membrane protein</topology>
    </subcellularLocation>
</comment>
<comment type="similarity">
    <text evidence="4">Belongs to the glycosyltransferase 34 family.</text>
</comment>
<protein>
    <recommendedName>
        <fullName evidence="4">Probable xyloglucan 6-xylosyltransferase 3</fullName>
        <ecNumber evidence="4">2.4.2.39</ecNumber>
    </recommendedName>
    <alternativeName>
        <fullName>Putative glycosyltransferase 3</fullName>
        <shortName>AtGT3</shortName>
        <ecNumber>2.4.-.-</ecNumber>
    </alternativeName>
</protein>